<comment type="function">
    <text evidence="1">Catalyzes the ATP-dependent amidation of deamido-NAD to form NAD. Uses ammonia as a nitrogen source.</text>
</comment>
<comment type="catalytic activity">
    <reaction evidence="1">
        <text>deamido-NAD(+) + NH4(+) + ATP = AMP + diphosphate + NAD(+) + H(+)</text>
        <dbReference type="Rhea" id="RHEA:21188"/>
        <dbReference type="ChEBI" id="CHEBI:15378"/>
        <dbReference type="ChEBI" id="CHEBI:28938"/>
        <dbReference type="ChEBI" id="CHEBI:30616"/>
        <dbReference type="ChEBI" id="CHEBI:33019"/>
        <dbReference type="ChEBI" id="CHEBI:57540"/>
        <dbReference type="ChEBI" id="CHEBI:58437"/>
        <dbReference type="ChEBI" id="CHEBI:456215"/>
        <dbReference type="EC" id="6.3.1.5"/>
    </reaction>
</comment>
<comment type="pathway">
    <text evidence="1">Cofactor biosynthesis; NAD(+) biosynthesis; NAD(+) from deamido-NAD(+) (ammonia route): step 1/1.</text>
</comment>
<comment type="subunit">
    <text evidence="1">Homodimer.</text>
</comment>
<comment type="similarity">
    <text evidence="1">Belongs to the NAD synthetase family.</text>
</comment>
<organism>
    <name type="scientific">Escherichia coli O6:K15:H31 (strain 536 / UPEC)</name>
    <dbReference type="NCBI Taxonomy" id="362663"/>
    <lineage>
        <taxon>Bacteria</taxon>
        <taxon>Pseudomonadati</taxon>
        <taxon>Pseudomonadota</taxon>
        <taxon>Gammaproteobacteria</taxon>
        <taxon>Enterobacterales</taxon>
        <taxon>Enterobacteriaceae</taxon>
        <taxon>Escherichia</taxon>
    </lineage>
</organism>
<gene>
    <name evidence="1" type="primary">nadE</name>
    <name type="ordered locus">ECP_1686</name>
</gene>
<sequence length="275" mass="30653">MTLQQQIIKALGAKPQINAEEEIRRSIDFLKSYLQTYPFIKSLVLGISGGQDSTLAGKLCQMAINELRQETGNESLQFIAVRLPYGVQADEQDCQDAIAFIQPDRVLTVNIKGAVLASEQALREAGIELSDFVRGNEKARERMKAQYSIAGMTSGVVVGTDHAAEAITGFFTKYGDGGTDINPLYRLNKRQGKQLLAALGCPEHLYKKAPTADLEDDRPSLPDEVALGVTYDNIDDYLEGKNVPEQVARTIENWYLKTEHKRRPPITVFDDFWKK</sequence>
<dbReference type="EC" id="6.3.1.5" evidence="1"/>
<dbReference type="EMBL" id="CP000247">
    <property type="protein sequence ID" value="ABG69689.1"/>
    <property type="molecule type" value="Genomic_DNA"/>
</dbReference>
<dbReference type="RefSeq" id="WP_000175018.1">
    <property type="nucleotide sequence ID" value="NC_008253.1"/>
</dbReference>
<dbReference type="SMR" id="Q0TH90"/>
<dbReference type="KEGG" id="ecp:ECP_1686"/>
<dbReference type="HOGENOM" id="CLU_059327_3_0_6"/>
<dbReference type="UniPathway" id="UPA00253">
    <property type="reaction ID" value="UER00333"/>
</dbReference>
<dbReference type="Proteomes" id="UP000009182">
    <property type="component" value="Chromosome"/>
</dbReference>
<dbReference type="GO" id="GO:0005737">
    <property type="term" value="C:cytoplasm"/>
    <property type="evidence" value="ECO:0007669"/>
    <property type="project" value="InterPro"/>
</dbReference>
<dbReference type="GO" id="GO:0005524">
    <property type="term" value="F:ATP binding"/>
    <property type="evidence" value="ECO:0007669"/>
    <property type="project" value="UniProtKB-UniRule"/>
</dbReference>
<dbReference type="GO" id="GO:0004359">
    <property type="term" value="F:glutaminase activity"/>
    <property type="evidence" value="ECO:0007669"/>
    <property type="project" value="InterPro"/>
</dbReference>
<dbReference type="GO" id="GO:0046872">
    <property type="term" value="F:metal ion binding"/>
    <property type="evidence" value="ECO:0007669"/>
    <property type="project" value="UniProtKB-KW"/>
</dbReference>
<dbReference type="GO" id="GO:0003952">
    <property type="term" value="F:NAD+ synthase (glutamine-hydrolyzing) activity"/>
    <property type="evidence" value="ECO:0007669"/>
    <property type="project" value="InterPro"/>
</dbReference>
<dbReference type="GO" id="GO:0008795">
    <property type="term" value="F:NAD+ synthase activity"/>
    <property type="evidence" value="ECO:0007669"/>
    <property type="project" value="UniProtKB-UniRule"/>
</dbReference>
<dbReference type="GO" id="GO:0009435">
    <property type="term" value="P:NAD biosynthetic process"/>
    <property type="evidence" value="ECO:0007669"/>
    <property type="project" value="UniProtKB-UniRule"/>
</dbReference>
<dbReference type="CDD" id="cd00553">
    <property type="entry name" value="NAD_synthase"/>
    <property type="match status" value="1"/>
</dbReference>
<dbReference type="FunFam" id="3.40.50.620:FF:000015">
    <property type="entry name" value="NH(3)-dependent NAD(+) synthetase"/>
    <property type="match status" value="1"/>
</dbReference>
<dbReference type="Gene3D" id="3.40.50.620">
    <property type="entry name" value="HUPs"/>
    <property type="match status" value="1"/>
</dbReference>
<dbReference type="HAMAP" id="MF_00193">
    <property type="entry name" value="NadE_ammonia_dep"/>
    <property type="match status" value="1"/>
</dbReference>
<dbReference type="InterPro" id="IPR022310">
    <property type="entry name" value="NAD/GMP_synthase"/>
</dbReference>
<dbReference type="InterPro" id="IPR003694">
    <property type="entry name" value="NAD_synthase"/>
</dbReference>
<dbReference type="InterPro" id="IPR022926">
    <property type="entry name" value="NH(3)-dep_NAD(+)_synth"/>
</dbReference>
<dbReference type="InterPro" id="IPR014729">
    <property type="entry name" value="Rossmann-like_a/b/a_fold"/>
</dbReference>
<dbReference type="NCBIfam" id="TIGR00552">
    <property type="entry name" value="nadE"/>
    <property type="match status" value="1"/>
</dbReference>
<dbReference type="NCBIfam" id="NF001979">
    <property type="entry name" value="PRK00768.1"/>
    <property type="match status" value="1"/>
</dbReference>
<dbReference type="PANTHER" id="PTHR23090">
    <property type="entry name" value="NH 3 /GLUTAMINE-DEPENDENT NAD + SYNTHETASE"/>
    <property type="match status" value="1"/>
</dbReference>
<dbReference type="PANTHER" id="PTHR23090:SF7">
    <property type="entry name" value="NH(3)-DEPENDENT NAD(+) SYNTHETASE"/>
    <property type="match status" value="1"/>
</dbReference>
<dbReference type="Pfam" id="PF02540">
    <property type="entry name" value="NAD_synthase"/>
    <property type="match status" value="1"/>
</dbReference>
<dbReference type="SUPFAM" id="SSF52402">
    <property type="entry name" value="Adenine nucleotide alpha hydrolases-like"/>
    <property type="match status" value="1"/>
</dbReference>
<evidence type="ECO:0000255" key="1">
    <source>
        <dbReference type="HAMAP-Rule" id="MF_00193"/>
    </source>
</evidence>
<reference key="1">
    <citation type="journal article" date="2006" name="Mol. Microbiol.">
        <title>Role of pathogenicity island-associated integrases in the genome plasticity of uropathogenic Escherichia coli strain 536.</title>
        <authorList>
            <person name="Hochhut B."/>
            <person name="Wilde C."/>
            <person name="Balling G."/>
            <person name="Middendorf B."/>
            <person name="Dobrindt U."/>
            <person name="Brzuszkiewicz E."/>
            <person name="Gottschalk G."/>
            <person name="Carniel E."/>
            <person name="Hacker J."/>
        </authorList>
    </citation>
    <scope>NUCLEOTIDE SEQUENCE [LARGE SCALE GENOMIC DNA]</scope>
    <source>
        <strain>536 / UPEC</strain>
    </source>
</reference>
<proteinExistence type="inferred from homology"/>
<feature type="chain" id="PRO_1000077552" description="NH(3)-dependent NAD(+) synthetase">
    <location>
        <begin position="1"/>
        <end position="275"/>
    </location>
</feature>
<feature type="binding site" evidence="1">
    <location>
        <begin position="46"/>
        <end position="53"/>
    </location>
    <ligand>
        <name>ATP</name>
        <dbReference type="ChEBI" id="CHEBI:30616"/>
    </ligand>
</feature>
<feature type="binding site" evidence="1">
    <location>
        <position position="52"/>
    </location>
    <ligand>
        <name>Mg(2+)</name>
        <dbReference type="ChEBI" id="CHEBI:18420"/>
    </ligand>
</feature>
<feature type="binding site" evidence="1">
    <location>
        <position position="140"/>
    </location>
    <ligand>
        <name>deamido-NAD(+)</name>
        <dbReference type="ChEBI" id="CHEBI:58437"/>
    </ligand>
</feature>
<feature type="binding site" evidence="1">
    <location>
        <position position="160"/>
    </location>
    <ligand>
        <name>ATP</name>
        <dbReference type="ChEBI" id="CHEBI:30616"/>
    </ligand>
</feature>
<feature type="binding site" evidence="1">
    <location>
        <position position="165"/>
    </location>
    <ligand>
        <name>Mg(2+)</name>
        <dbReference type="ChEBI" id="CHEBI:18420"/>
    </ligand>
</feature>
<feature type="binding site" evidence="1">
    <location>
        <position position="173"/>
    </location>
    <ligand>
        <name>deamido-NAD(+)</name>
        <dbReference type="ChEBI" id="CHEBI:58437"/>
    </ligand>
</feature>
<feature type="binding site" evidence="1">
    <location>
        <position position="180"/>
    </location>
    <ligand>
        <name>deamido-NAD(+)</name>
        <dbReference type="ChEBI" id="CHEBI:58437"/>
    </ligand>
</feature>
<feature type="binding site" evidence="1">
    <location>
        <position position="189"/>
    </location>
    <ligand>
        <name>ATP</name>
        <dbReference type="ChEBI" id="CHEBI:30616"/>
    </ligand>
</feature>
<feature type="binding site" evidence="1">
    <location>
        <position position="211"/>
    </location>
    <ligand>
        <name>ATP</name>
        <dbReference type="ChEBI" id="CHEBI:30616"/>
    </ligand>
</feature>
<feature type="binding site" evidence="1">
    <location>
        <begin position="260"/>
        <end position="261"/>
    </location>
    <ligand>
        <name>deamido-NAD(+)</name>
        <dbReference type="ChEBI" id="CHEBI:58437"/>
    </ligand>
</feature>
<protein>
    <recommendedName>
        <fullName evidence="1">NH(3)-dependent NAD(+) synthetase</fullName>
        <ecNumber evidence="1">6.3.1.5</ecNumber>
    </recommendedName>
</protein>
<accession>Q0TH90</accession>
<keyword id="KW-0067">ATP-binding</keyword>
<keyword id="KW-0436">Ligase</keyword>
<keyword id="KW-0460">Magnesium</keyword>
<keyword id="KW-0479">Metal-binding</keyword>
<keyword id="KW-0520">NAD</keyword>
<keyword id="KW-0547">Nucleotide-binding</keyword>
<name>NADE_ECOL5</name>